<name>GLPK_PSEU2</name>
<sequence length="501" mass="55829">MTDTQNKNYIIALDQGTTSSRAIIFDRDANVVSTAQSEFVQHYPQAGWVEHDPMEIFATQTACMTKALAQADLHHNQIAAIGITNQRETTVIWERDTGRPIYNAIVWQCRRSTEICQQLKRDGLEEYIKDTTGLVIDPYFSGSKVKWILDNVEGSRERARKGELMFGTIDTWLIWKFTGGKVHVTDYTNASRTMLFNIHTLEWDQRMLDVLDIPREMLPEVKASSEVYGHSKSGIPIAGIAGDQQAALFGQMCVEPGQAKNTYGTGCFLLMNTGKKAVKSAHGMLTTIGCGPRGEVAYALEGAVFNGGSTVQWLRDELKLINDALDTEYFAGKVKDSNGVYLVPAFTGLGAPYWDPYARGALFGLTRGVKVDHIIRAALESIAYQTRDVLDAMQQDSGERLKSLRVDGGAVANNFLMQFQADILGTHVERPQMRETTALGAAFLAGLAIGFWSSLDELRNKAVIERVFEPSCEEAHREKLYAGWQKAVARTRDWEPHENEE</sequence>
<feature type="chain" id="PRO_1000020763" description="Glycerol kinase">
    <location>
        <begin position="1"/>
        <end position="501"/>
    </location>
</feature>
<feature type="binding site" evidence="1">
    <location>
        <position position="17"/>
    </location>
    <ligand>
        <name>ADP</name>
        <dbReference type="ChEBI" id="CHEBI:456216"/>
    </ligand>
</feature>
<feature type="binding site" evidence="1">
    <location>
        <position position="17"/>
    </location>
    <ligand>
        <name>ATP</name>
        <dbReference type="ChEBI" id="CHEBI:30616"/>
    </ligand>
</feature>
<feature type="binding site" evidence="1">
    <location>
        <position position="17"/>
    </location>
    <ligand>
        <name>sn-glycerol 3-phosphate</name>
        <dbReference type="ChEBI" id="CHEBI:57597"/>
    </ligand>
</feature>
<feature type="binding site" evidence="1">
    <location>
        <position position="18"/>
    </location>
    <ligand>
        <name>ATP</name>
        <dbReference type="ChEBI" id="CHEBI:30616"/>
    </ligand>
</feature>
<feature type="binding site" evidence="1">
    <location>
        <position position="19"/>
    </location>
    <ligand>
        <name>ATP</name>
        <dbReference type="ChEBI" id="CHEBI:30616"/>
    </ligand>
</feature>
<feature type="binding site" evidence="1">
    <location>
        <position position="21"/>
    </location>
    <ligand>
        <name>ADP</name>
        <dbReference type="ChEBI" id="CHEBI:456216"/>
    </ligand>
</feature>
<feature type="binding site" evidence="1">
    <location>
        <position position="87"/>
    </location>
    <ligand>
        <name>glycerol</name>
        <dbReference type="ChEBI" id="CHEBI:17754"/>
    </ligand>
</feature>
<feature type="binding site" evidence="1">
    <location>
        <position position="87"/>
    </location>
    <ligand>
        <name>sn-glycerol 3-phosphate</name>
        <dbReference type="ChEBI" id="CHEBI:57597"/>
    </ligand>
</feature>
<feature type="binding site" evidence="1">
    <location>
        <position position="88"/>
    </location>
    <ligand>
        <name>glycerol</name>
        <dbReference type="ChEBI" id="CHEBI:17754"/>
    </ligand>
</feature>
<feature type="binding site" evidence="1">
    <location>
        <position position="88"/>
    </location>
    <ligand>
        <name>sn-glycerol 3-phosphate</name>
        <dbReference type="ChEBI" id="CHEBI:57597"/>
    </ligand>
</feature>
<feature type="binding site" evidence="1">
    <location>
        <position position="139"/>
    </location>
    <ligand>
        <name>glycerol</name>
        <dbReference type="ChEBI" id="CHEBI:17754"/>
    </ligand>
</feature>
<feature type="binding site" evidence="1">
    <location>
        <position position="139"/>
    </location>
    <ligand>
        <name>sn-glycerol 3-phosphate</name>
        <dbReference type="ChEBI" id="CHEBI:57597"/>
    </ligand>
</feature>
<feature type="binding site" evidence="1">
    <location>
        <position position="243"/>
    </location>
    <ligand>
        <name>glycerol</name>
        <dbReference type="ChEBI" id="CHEBI:17754"/>
    </ligand>
</feature>
<feature type="binding site" evidence="1">
    <location>
        <position position="243"/>
    </location>
    <ligand>
        <name>sn-glycerol 3-phosphate</name>
        <dbReference type="ChEBI" id="CHEBI:57597"/>
    </ligand>
</feature>
<feature type="binding site" evidence="1">
    <location>
        <position position="244"/>
    </location>
    <ligand>
        <name>glycerol</name>
        <dbReference type="ChEBI" id="CHEBI:17754"/>
    </ligand>
</feature>
<feature type="binding site" evidence="1">
    <location>
        <position position="265"/>
    </location>
    <ligand>
        <name>ADP</name>
        <dbReference type="ChEBI" id="CHEBI:456216"/>
    </ligand>
</feature>
<feature type="binding site" evidence="1">
    <location>
        <position position="265"/>
    </location>
    <ligand>
        <name>ATP</name>
        <dbReference type="ChEBI" id="CHEBI:30616"/>
    </ligand>
</feature>
<feature type="binding site" evidence="1">
    <location>
        <position position="308"/>
    </location>
    <ligand>
        <name>ADP</name>
        <dbReference type="ChEBI" id="CHEBI:456216"/>
    </ligand>
</feature>
<feature type="binding site" evidence="1">
    <location>
        <position position="308"/>
    </location>
    <ligand>
        <name>ATP</name>
        <dbReference type="ChEBI" id="CHEBI:30616"/>
    </ligand>
</feature>
<feature type="binding site" evidence="1">
    <location>
        <position position="312"/>
    </location>
    <ligand>
        <name>ATP</name>
        <dbReference type="ChEBI" id="CHEBI:30616"/>
    </ligand>
</feature>
<feature type="binding site" evidence="1">
    <location>
        <position position="409"/>
    </location>
    <ligand>
        <name>ADP</name>
        <dbReference type="ChEBI" id="CHEBI:456216"/>
    </ligand>
</feature>
<feature type="binding site" evidence="1">
    <location>
        <position position="409"/>
    </location>
    <ligand>
        <name>ATP</name>
        <dbReference type="ChEBI" id="CHEBI:30616"/>
    </ligand>
</feature>
<feature type="binding site" evidence="1">
    <location>
        <position position="413"/>
    </location>
    <ligand>
        <name>ADP</name>
        <dbReference type="ChEBI" id="CHEBI:456216"/>
    </ligand>
</feature>
<protein>
    <recommendedName>
        <fullName evidence="1">Glycerol kinase</fullName>
        <ecNumber evidence="1">2.7.1.30</ecNumber>
    </recommendedName>
    <alternativeName>
        <fullName evidence="1">ATP:glycerol 3-phosphotransferase</fullName>
    </alternativeName>
    <alternativeName>
        <fullName evidence="1">Glycerokinase</fullName>
        <shortName evidence="1">GK</shortName>
    </alternativeName>
</protein>
<accession>Q4ZPI7</accession>
<keyword id="KW-0067">ATP-binding</keyword>
<keyword id="KW-0319">Glycerol metabolism</keyword>
<keyword id="KW-0418">Kinase</keyword>
<keyword id="KW-0547">Nucleotide-binding</keyword>
<keyword id="KW-0808">Transferase</keyword>
<reference key="1">
    <citation type="journal article" date="2005" name="Proc. Natl. Acad. Sci. U.S.A.">
        <title>Comparison of the complete genome sequences of Pseudomonas syringae pv. syringae B728a and pv. tomato DC3000.</title>
        <authorList>
            <person name="Feil H."/>
            <person name="Feil W.S."/>
            <person name="Chain P."/>
            <person name="Larimer F."/>
            <person name="Dibartolo G."/>
            <person name="Copeland A."/>
            <person name="Lykidis A."/>
            <person name="Trong S."/>
            <person name="Nolan M."/>
            <person name="Goltsman E."/>
            <person name="Thiel J."/>
            <person name="Malfatti S."/>
            <person name="Loper J.E."/>
            <person name="Lapidus A."/>
            <person name="Detter J.C."/>
            <person name="Land M."/>
            <person name="Richardson P.M."/>
            <person name="Kyrpides N.C."/>
            <person name="Ivanova N."/>
            <person name="Lindow S.E."/>
        </authorList>
    </citation>
    <scope>NUCLEOTIDE SEQUENCE [LARGE SCALE GENOMIC DNA]</scope>
    <source>
        <strain>B728a</strain>
    </source>
</reference>
<proteinExistence type="inferred from homology"/>
<comment type="function">
    <text evidence="1">Key enzyme in the regulation of glycerol uptake and metabolism. Catalyzes the phosphorylation of glycerol to yield sn-glycerol 3-phosphate.</text>
</comment>
<comment type="catalytic activity">
    <reaction evidence="1">
        <text>glycerol + ATP = sn-glycerol 3-phosphate + ADP + H(+)</text>
        <dbReference type="Rhea" id="RHEA:21644"/>
        <dbReference type="ChEBI" id="CHEBI:15378"/>
        <dbReference type="ChEBI" id="CHEBI:17754"/>
        <dbReference type="ChEBI" id="CHEBI:30616"/>
        <dbReference type="ChEBI" id="CHEBI:57597"/>
        <dbReference type="ChEBI" id="CHEBI:456216"/>
        <dbReference type="EC" id="2.7.1.30"/>
    </reaction>
</comment>
<comment type="activity regulation">
    <text evidence="1">Inhibited by fructose 1,6-bisphosphate (FBP).</text>
</comment>
<comment type="pathway">
    <text evidence="1">Polyol metabolism; glycerol degradation via glycerol kinase pathway; sn-glycerol 3-phosphate from glycerol: step 1/1.</text>
</comment>
<comment type="similarity">
    <text evidence="1">Belongs to the FGGY kinase family.</text>
</comment>
<organism>
    <name type="scientific">Pseudomonas syringae pv. syringae (strain B728a)</name>
    <dbReference type="NCBI Taxonomy" id="205918"/>
    <lineage>
        <taxon>Bacteria</taxon>
        <taxon>Pseudomonadati</taxon>
        <taxon>Pseudomonadota</taxon>
        <taxon>Gammaproteobacteria</taxon>
        <taxon>Pseudomonadales</taxon>
        <taxon>Pseudomonadaceae</taxon>
        <taxon>Pseudomonas</taxon>
        <taxon>Pseudomonas syringae</taxon>
    </lineage>
</organism>
<gene>
    <name evidence="1" type="primary">glpK</name>
    <name type="ordered locus">Psyr_3905</name>
</gene>
<dbReference type="EC" id="2.7.1.30" evidence="1"/>
<dbReference type="EMBL" id="CP000075">
    <property type="protein sequence ID" value="AAY38935.1"/>
    <property type="molecule type" value="Genomic_DNA"/>
</dbReference>
<dbReference type="RefSeq" id="WP_003405430.1">
    <property type="nucleotide sequence ID" value="NC_007005.1"/>
</dbReference>
<dbReference type="RefSeq" id="YP_236973.1">
    <property type="nucleotide sequence ID" value="NC_007005.1"/>
</dbReference>
<dbReference type="SMR" id="Q4ZPI7"/>
<dbReference type="STRING" id="205918.Psyr_3905"/>
<dbReference type="GeneID" id="77279760"/>
<dbReference type="KEGG" id="psb:Psyr_3905"/>
<dbReference type="PATRIC" id="fig|205918.7.peg.4017"/>
<dbReference type="eggNOG" id="COG0554">
    <property type="taxonomic scope" value="Bacteria"/>
</dbReference>
<dbReference type="HOGENOM" id="CLU_009281_2_3_6"/>
<dbReference type="OrthoDB" id="9805576at2"/>
<dbReference type="UniPathway" id="UPA00618">
    <property type="reaction ID" value="UER00672"/>
</dbReference>
<dbReference type="Proteomes" id="UP000000426">
    <property type="component" value="Chromosome"/>
</dbReference>
<dbReference type="GO" id="GO:0005829">
    <property type="term" value="C:cytosol"/>
    <property type="evidence" value="ECO:0007669"/>
    <property type="project" value="TreeGrafter"/>
</dbReference>
<dbReference type="GO" id="GO:0005524">
    <property type="term" value="F:ATP binding"/>
    <property type="evidence" value="ECO:0007669"/>
    <property type="project" value="UniProtKB-UniRule"/>
</dbReference>
<dbReference type="GO" id="GO:0004370">
    <property type="term" value="F:glycerol kinase activity"/>
    <property type="evidence" value="ECO:0000250"/>
    <property type="project" value="UniProtKB"/>
</dbReference>
<dbReference type="GO" id="GO:0019563">
    <property type="term" value="P:glycerol catabolic process"/>
    <property type="evidence" value="ECO:0007669"/>
    <property type="project" value="UniProtKB-UniRule"/>
</dbReference>
<dbReference type="GO" id="GO:0006071">
    <property type="term" value="P:glycerol metabolic process"/>
    <property type="evidence" value="ECO:0000250"/>
    <property type="project" value="UniProtKB"/>
</dbReference>
<dbReference type="GO" id="GO:0006072">
    <property type="term" value="P:glycerol-3-phosphate metabolic process"/>
    <property type="evidence" value="ECO:0007669"/>
    <property type="project" value="InterPro"/>
</dbReference>
<dbReference type="CDD" id="cd07786">
    <property type="entry name" value="FGGY_EcGK_like"/>
    <property type="match status" value="1"/>
</dbReference>
<dbReference type="FunFam" id="3.30.420.40:FF:000007">
    <property type="entry name" value="Glycerol kinase"/>
    <property type="match status" value="1"/>
</dbReference>
<dbReference type="FunFam" id="3.30.420.40:FF:000008">
    <property type="entry name" value="Glycerol kinase"/>
    <property type="match status" value="1"/>
</dbReference>
<dbReference type="Gene3D" id="3.30.420.40">
    <property type="match status" value="2"/>
</dbReference>
<dbReference type="HAMAP" id="MF_00186">
    <property type="entry name" value="Glycerol_kin"/>
    <property type="match status" value="1"/>
</dbReference>
<dbReference type="InterPro" id="IPR043129">
    <property type="entry name" value="ATPase_NBD"/>
</dbReference>
<dbReference type="InterPro" id="IPR000577">
    <property type="entry name" value="Carb_kinase_FGGY"/>
</dbReference>
<dbReference type="InterPro" id="IPR018483">
    <property type="entry name" value="Carb_kinase_FGGY_CS"/>
</dbReference>
<dbReference type="InterPro" id="IPR018485">
    <property type="entry name" value="FGGY_C"/>
</dbReference>
<dbReference type="InterPro" id="IPR018484">
    <property type="entry name" value="FGGY_N"/>
</dbReference>
<dbReference type="InterPro" id="IPR005999">
    <property type="entry name" value="Glycerol_kin"/>
</dbReference>
<dbReference type="NCBIfam" id="TIGR01311">
    <property type="entry name" value="glycerol_kin"/>
    <property type="match status" value="1"/>
</dbReference>
<dbReference type="NCBIfam" id="NF000756">
    <property type="entry name" value="PRK00047.1"/>
    <property type="match status" value="1"/>
</dbReference>
<dbReference type="PANTHER" id="PTHR10196:SF69">
    <property type="entry name" value="GLYCEROL KINASE"/>
    <property type="match status" value="1"/>
</dbReference>
<dbReference type="PANTHER" id="PTHR10196">
    <property type="entry name" value="SUGAR KINASE"/>
    <property type="match status" value="1"/>
</dbReference>
<dbReference type="Pfam" id="PF02782">
    <property type="entry name" value="FGGY_C"/>
    <property type="match status" value="1"/>
</dbReference>
<dbReference type="Pfam" id="PF00370">
    <property type="entry name" value="FGGY_N"/>
    <property type="match status" value="1"/>
</dbReference>
<dbReference type="PIRSF" id="PIRSF000538">
    <property type="entry name" value="GlpK"/>
    <property type="match status" value="1"/>
</dbReference>
<dbReference type="SUPFAM" id="SSF53067">
    <property type="entry name" value="Actin-like ATPase domain"/>
    <property type="match status" value="2"/>
</dbReference>
<dbReference type="PROSITE" id="PS00933">
    <property type="entry name" value="FGGY_KINASES_1"/>
    <property type="match status" value="1"/>
</dbReference>
<dbReference type="PROSITE" id="PS00445">
    <property type="entry name" value="FGGY_KINASES_2"/>
    <property type="match status" value="1"/>
</dbReference>
<evidence type="ECO:0000255" key="1">
    <source>
        <dbReference type="HAMAP-Rule" id="MF_00186"/>
    </source>
</evidence>